<organism>
    <name type="scientific">Escherichia coli (strain ATCC 8739 / DSM 1576 / NBRC 3972 / NCIMB 8545 / WDCM 00012 / Crooks)</name>
    <dbReference type="NCBI Taxonomy" id="481805"/>
    <lineage>
        <taxon>Bacteria</taxon>
        <taxon>Pseudomonadati</taxon>
        <taxon>Pseudomonadota</taxon>
        <taxon>Gammaproteobacteria</taxon>
        <taxon>Enterobacterales</taxon>
        <taxon>Enterobacteriaceae</taxon>
        <taxon>Escherichia</taxon>
    </lineage>
</organism>
<feature type="signal peptide" evidence="2">
    <location>
        <begin position="1"/>
        <end position="22"/>
    </location>
</feature>
<feature type="chain" id="PRO_5000314440" description="Common pilus major fimbrillin subunit EcpA">
    <location>
        <begin position="23"/>
        <end position="195"/>
    </location>
</feature>
<accession>B1J0X9</accession>
<sequence>MKKKVLAIALVTVFTGMGVAQAADVTAQAVATWSATAKKDTTSKLVVTPLGSLAFQYAEGIKGFNSQKGLFDVAIEGDSTATAFKLTSRLITNTLTQLDTSGSTLNVGVDYNGAAVEKTGDTVMIDTANGVLGGNLSPLANGYNASNRTTAQDGFTFTIISGTTNGTTAVTDYSTLPEGIWSGDVSVQFDATWTS</sequence>
<dbReference type="EMBL" id="CP000946">
    <property type="protein sequence ID" value="ACA78947.1"/>
    <property type="molecule type" value="Genomic_DNA"/>
</dbReference>
<dbReference type="RefSeq" id="WP_000730974.1">
    <property type="nucleotide sequence ID" value="NZ_MTFT01000010.1"/>
</dbReference>
<dbReference type="SMR" id="B1J0X9"/>
<dbReference type="GeneID" id="75170261"/>
<dbReference type="KEGG" id="ecl:EcolC_3326"/>
<dbReference type="HOGENOM" id="CLU_120328_0_0_6"/>
<dbReference type="GO" id="GO:0009289">
    <property type="term" value="C:pilus"/>
    <property type="evidence" value="ECO:0007669"/>
    <property type="project" value="UniProtKB-SubCell"/>
</dbReference>
<dbReference type="Gene3D" id="2.60.40.3290">
    <property type="entry name" value="Fimbrial protein EcpA"/>
    <property type="match status" value="1"/>
</dbReference>
<dbReference type="InterPro" id="IPR016514">
    <property type="entry name" value="EcpA"/>
</dbReference>
<dbReference type="InterPro" id="IPR038478">
    <property type="entry name" value="Fimbrillin_EcpA_sf"/>
</dbReference>
<dbReference type="Pfam" id="PF16449">
    <property type="entry name" value="MatB"/>
    <property type="match status" value="1"/>
</dbReference>
<dbReference type="PIRSF" id="PIRSF007320">
    <property type="entry name" value="Fimbrillin_MatB"/>
    <property type="match status" value="1"/>
</dbReference>
<protein>
    <recommendedName>
        <fullName>Common pilus major fimbrillin subunit EcpA</fullName>
    </recommendedName>
    <alternativeName>
        <fullName>MatB fimbrillin</fullName>
    </alternativeName>
</protein>
<evidence type="ECO:0000250" key="1"/>
<evidence type="ECO:0000255" key="2"/>
<evidence type="ECO:0000305" key="3"/>
<reference key="1">
    <citation type="submission" date="2008-02" db="EMBL/GenBank/DDBJ databases">
        <title>Complete sequence of Escherichia coli C str. ATCC 8739.</title>
        <authorList>
            <person name="Copeland A."/>
            <person name="Lucas S."/>
            <person name="Lapidus A."/>
            <person name="Glavina del Rio T."/>
            <person name="Dalin E."/>
            <person name="Tice H."/>
            <person name="Bruce D."/>
            <person name="Goodwin L."/>
            <person name="Pitluck S."/>
            <person name="Kiss H."/>
            <person name="Brettin T."/>
            <person name="Detter J.C."/>
            <person name="Han C."/>
            <person name="Kuske C.R."/>
            <person name="Schmutz J."/>
            <person name="Larimer F."/>
            <person name="Land M."/>
            <person name="Hauser L."/>
            <person name="Kyrpides N."/>
            <person name="Mikhailova N."/>
            <person name="Ingram L."/>
            <person name="Richardson P."/>
        </authorList>
    </citation>
    <scope>NUCLEOTIDE SEQUENCE [LARGE SCALE GENOMIC DNA]</scope>
    <source>
        <strain>ATCC 8739 / DSM 1576 / NBRC 3972 / NCIMB 8545 / WDCM 00012 / Crooks</strain>
    </source>
</reference>
<proteinExistence type="inferred from homology"/>
<comment type="function">
    <text evidence="1">Part of the ecpRABCDE operon, which encodes the E.coli common pilus (ECP). ECP is found in both commensal and pathogenic strains and plays a dual role in early-stage biofilm development and host cell recognition. Major subunit of the fimbria (By similarity).</text>
</comment>
<comment type="subunit">
    <text evidence="1">Self-associates. Forms filaments. Interacts with EcpD (By similarity).</text>
</comment>
<comment type="subcellular location">
    <subcellularLocation>
        <location evidence="1">Fimbrium</location>
    </subcellularLocation>
</comment>
<comment type="induction">
    <text evidence="1">Negatively regulated by H-NS. Positively regulated by IHF and EcpR (By similarity).</text>
</comment>
<comment type="similarity">
    <text evidence="3">Belongs to the EcpA/MatB fimbrillin family.</text>
</comment>
<keyword id="KW-0281">Fimbrium</keyword>
<keyword id="KW-0732">Signal</keyword>
<gene>
    <name type="primary">ecpA</name>
    <name type="synonym">matB</name>
    <name type="ordered locus">EcolC_3326</name>
</gene>
<name>ECPA_ECOLC</name>